<dbReference type="EC" id="5.3.1.1" evidence="1"/>
<dbReference type="EMBL" id="AE000520">
    <property type="protein sequence ID" value="AAC65522.1"/>
    <property type="molecule type" value="Genomic_DNA"/>
</dbReference>
<dbReference type="PIR" id="F71311">
    <property type="entry name" value="F71311"/>
</dbReference>
<dbReference type="RefSeq" id="WP_010881984.1">
    <property type="nucleotide sequence ID" value="NC_021490.2"/>
</dbReference>
<dbReference type="SMR" id="O83548"/>
<dbReference type="IntAct" id="O83548">
    <property type="interactions" value="1"/>
</dbReference>
<dbReference type="STRING" id="243276.TP_0537"/>
<dbReference type="EnsemblBacteria" id="AAC65522">
    <property type="protein sequence ID" value="AAC65522"/>
    <property type="gene ID" value="TP_0537"/>
</dbReference>
<dbReference type="GeneID" id="93876306"/>
<dbReference type="KEGG" id="tpa:TP_0537"/>
<dbReference type="KEGG" id="tpw:TPANIC_0537"/>
<dbReference type="eggNOG" id="COG0149">
    <property type="taxonomic scope" value="Bacteria"/>
</dbReference>
<dbReference type="HOGENOM" id="CLU_024251_2_3_12"/>
<dbReference type="OrthoDB" id="9809429at2"/>
<dbReference type="UniPathway" id="UPA00109">
    <property type="reaction ID" value="UER00189"/>
</dbReference>
<dbReference type="UniPathway" id="UPA00138"/>
<dbReference type="Proteomes" id="UP000000811">
    <property type="component" value="Chromosome"/>
</dbReference>
<dbReference type="GO" id="GO:0005829">
    <property type="term" value="C:cytosol"/>
    <property type="evidence" value="ECO:0007669"/>
    <property type="project" value="TreeGrafter"/>
</dbReference>
<dbReference type="GO" id="GO:0004807">
    <property type="term" value="F:triose-phosphate isomerase activity"/>
    <property type="evidence" value="ECO:0007669"/>
    <property type="project" value="UniProtKB-UniRule"/>
</dbReference>
<dbReference type="GO" id="GO:0006094">
    <property type="term" value="P:gluconeogenesis"/>
    <property type="evidence" value="ECO:0007669"/>
    <property type="project" value="UniProtKB-UniRule"/>
</dbReference>
<dbReference type="GO" id="GO:0046166">
    <property type="term" value="P:glyceraldehyde-3-phosphate biosynthetic process"/>
    <property type="evidence" value="ECO:0007669"/>
    <property type="project" value="TreeGrafter"/>
</dbReference>
<dbReference type="GO" id="GO:0019563">
    <property type="term" value="P:glycerol catabolic process"/>
    <property type="evidence" value="ECO:0007669"/>
    <property type="project" value="TreeGrafter"/>
</dbReference>
<dbReference type="GO" id="GO:0006096">
    <property type="term" value="P:glycolytic process"/>
    <property type="evidence" value="ECO:0007669"/>
    <property type="project" value="UniProtKB-UniRule"/>
</dbReference>
<dbReference type="CDD" id="cd00311">
    <property type="entry name" value="TIM"/>
    <property type="match status" value="1"/>
</dbReference>
<dbReference type="FunFam" id="3.20.20.70:FF:000016">
    <property type="entry name" value="Triosephosphate isomerase"/>
    <property type="match status" value="1"/>
</dbReference>
<dbReference type="Gene3D" id="3.20.20.70">
    <property type="entry name" value="Aldolase class I"/>
    <property type="match status" value="1"/>
</dbReference>
<dbReference type="HAMAP" id="MF_00147_B">
    <property type="entry name" value="TIM_B"/>
    <property type="match status" value="1"/>
</dbReference>
<dbReference type="InterPro" id="IPR013785">
    <property type="entry name" value="Aldolase_TIM"/>
</dbReference>
<dbReference type="InterPro" id="IPR035990">
    <property type="entry name" value="TIM_sf"/>
</dbReference>
<dbReference type="InterPro" id="IPR022896">
    <property type="entry name" value="TrioseP_Isoase_bac/euk"/>
</dbReference>
<dbReference type="InterPro" id="IPR000652">
    <property type="entry name" value="Triosephosphate_isomerase"/>
</dbReference>
<dbReference type="InterPro" id="IPR020861">
    <property type="entry name" value="Triosephosphate_isomerase_AS"/>
</dbReference>
<dbReference type="NCBIfam" id="TIGR00419">
    <property type="entry name" value="tim"/>
    <property type="match status" value="1"/>
</dbReference>
<dbReference type="PANTHER" id="PTHR21139">
    <property type="entry name" value="TRIOSEPHOSPHATE ISOMERASE"/>
    <property type="match status" value="1"/>
</dbReference>
<dbReference type="PANTHER" id="PTHR21139:SF42">
    <property type="entry name" value="TRIOSEPHOSPHATE ISOMERASE"/>
    <property type="match status" value="1"/>
</dbReference>
<dbReference type="Pfam" id="PF00121">
    <property type="entry name" value="TIM"/>
    <property type="match status" value="1"/>
</dbReference>
<dbReference type="SUPFAM" id="SSF51351">
    <property type="entry name" value="Triosephosphate isomerase (TIM)"/>
    <property type="match status" value="1"/>
</dbReference>
<dbReference type="PROSITE" id="PS00171">
    <property type="entry name" value="TIM_1"/>
    <property type="match status" value="1"/>
</dbReference>
<dbReference type="PROSITE" id="PS51440">
    <property type="entry name" value="TIM_2"/>
    <property type="match status" value="1"/>
</dbReference>
<protein>
    <recommendedName>
        <fullName evidence="1">Triosephosphate isomerase</fullName>
        <shortName evidence="1">TIM</shortName>
        <shortName evidence="1">TPI</shortName>
        <ecNumber evidence="1">5.3.1.1</ecNumber>
    </recommendedName>
    <alternativeName>
        <fullName evidence="1">Triose-phosphate isomerase</fullName>
    </alternativeName>
</protein>
<sequence length="249" mass="26540">MRGYFIAGNWKMHKTCAEAVALAQELVRELRGGPHTYMIAPSFTALDAVGKVLRGSNVLLGAQDVSSEEWGAHTGEVSVLQLEDLGVQVVIVGHSERRHGRGENDKLINQKVRRVLESGLRVILCVGERLQEYEAGCTNEVVGTQVRAGMADVCGSLMHNVTVAYEPVWAIGTGKTATPAQANAVHAHIRSVVREMYGAAIAEALCIQYGGSMKAENARALLAEEHIDGGLIGGASLEAASFVPIARSV</sequence>
<evidence type="ECO:0000255" key="1">
    <source>
        <dbReference type="HAMAP-Rule" id="MF_00147"/>
    </source>
</evidence>
<keyword id="KW-0963">Cytoplasm</keyword>
<keyword id="KW-0312">Gluconeogenesis</keyword>
<keyword id="KW-0324">Glycolysis</keyword>
<keyword id="KW-0413">Isomerase</keyword>
<keyword id="KW-1185">Reference proteome</keyword>
<proteinExistence type="inferred from homology"/>
<organism>
    <name type="scientific">Treponema pallidum (strain Nichols)</name>
    <dbReference type="NCBI Taxonomy" id="243276"/>
    <lineage>
        <taxon>Bacteria</taxon>
        <taxon>Pseudomonadati</taxon>
        <taxon>Spirochaetota</taxon>
        <taxon>Spirochaetia</taxon>
        <taxon>Spirochaetales</taxon>
        <taxon>Treponemataceae</taxon>
        <taxon>Treponema</taxon>
    </lineage>
</organism>
<gene>
    <name evidence="1" type="primary">tpiA</name>
    <name type="synonym">tpi</name>
    <name type="ordered locus">TP_0537</name>
</gene>
<accession>O83548</accession>
<comment type="function">
    <text evidence="1">Involved in the gluconeogenesis. Catalyzes stereospecifically the conversion of dihydroxyacetone phosphate (DHAP) to D-glyceraldehyde-3-phosphate (G3P).</text>
</comment>
<comment type="catalytic activity">
    <reaction evidence="1">
        <text>D-glyceraldehyde 3-phosphate = dihydroxyacetone phosphate</text>
        <dbReference type="Rhea" id="RHEA:18585"/>
        <dbReference type="ChEBI" id="CHEBI:57642"/>
        <dbReference type="ChEBI" id="CHEBI:59776"/>
        <dbReference type="EC" id="5.3.1.1"/>
    </reaction>
</comment>
<comment type="pathway">
    <text evidence="1">Carbohydrate biosynthesis; gluconeogenesis.</text>
</comment>
<comment type="pathway">
    <text evidence="1">Carbohydrate degradation; glycolysis; D-glyceraldehyde 3-phosphate from glycerone phosphate: step 1/1.</text>
</comment>
<comment type="subunit">
    <text evidence="1">Homodimer.</text>
</comment>
<comment type="subcellular location">
    <subcellularLocation>
        <location evidence="1">Cytoplasm</location>
    </subcellularLocation>
</comment>
<comment type="similarity">
    <text evidence="1">Belongs to the triosephosphate isomerase family.</text>
</comment>
<reference key="1">
    <citation type="journal article" date="1998" name="Science">
        <title>Complete genome sequence of Treponema pallidum, the syphilis spirochete.</title>
        <authorList>
            <person name="Fraser C.M."/>
            <person name="Norris S.J."/>
            <person name="Weinstock G.M."/>
            <person name="White O."/>
            <person name="Sutton G.G."/>
            <person name="Dodson R.J."/>
            <person name="Gwinn M.L."/>
            <person name="Hickey E.K."/>
            <person name="Clayton R.A."/>
            <person name="Ketchum K.A."/>
            <person name="Sodergren E."/>
            <person name="Hardham J.M."/>
            <person name="McLeod M.P."/>
            <person name="Salzberg S.L."/>
            <person name="Peterson J.D."/>
            <person name="Khalak H.G."/>
            <person name="Richardson D.L."/>
            <person name="Howell J.K."/>
            <person name="Chidambaram M."/>
            <person name="Utterback T.R."/>
            <person name="McDonald L.A."/>
            <person name="Artiach P."/>
            <person name="Bowman C."/>
            <person name="Cotton M.D."/>
            <person name="Fujii C."/>
            <person name="Garland S.A."/>
            <person name="Hatch B."/>
            <person name="Horst K."/>
            <person name="Roberts K.M."/>
            <person name="Sandusky M."/>
            <person name="Weidman J.F."/>
            <person name="Smith H.O."/>
            <person name="Venter J.C."/>
        </authorList>
    </citation>
    <scope>NUCLEOTIDE SEQUENCE [LARGE SCALE GENOMIC DNA]</scope>
    <source>
        <strain>Nichols</strain>
    </source>
</reference>
<name>TPIS_TREPA</name>
<feature type="chain" id="PRO_0000090308" description="Triosephosphate isomerase">
    <location>
        <begin position="1"/>
        <end position="249"/>
    </location>
</feature>
<feature type="active site" description="Electrophile" evidence="1">
    <location>
        <position position="94"/>
    </location>
</feature>
<feature type="active site" description="Proton acceptor" evidence="1">
    <location>
        <position position="166"/>
    </location>
</feature>
<feature type="binding site" evidence="1">
    <location>
        <begin position="9"/>
        <end position="11"/>
    </location>
    <ligand>
        <name>substrate</name>
    </ligand>
</feature>
<feature type="binding site" evidence="1">
    <location>
        <position position="172"/>
    </location>
    <ligand>
        <name>substrate</name>
    </ligand>
</feature>
<feature type="binding site" evidence="1">
    <location>
        <position position="212"/>
    </location>
    <ligand>
        <name>substrate</name>
    </ligand>
</feature>
<feature type="binding site" evidence="1">
    <location>
        <begin position="233"/>
        <end position="234"/>
    </location>
    <ligand>
        <name>substrate</name>
    </ligand>
</feature>